<protein>
    <recommendedName>
        <fullName evidence="2">Non-structural protein 3</fullName>
        <shortName evidence="2">NSP3</shortName>
    </recommendedName>
    <alternativeName>
        <fullName evidence="2">NCVP4</fullName>
    </alternativeName>
    <alternativeName>
        <fullName evidence="2">Non-structural RNA-binding protein 34</fullName>
        <shortName evidence="2">NS34</shortName>
    </alternativeName>
    <component>
        <recommendedName>
            <fullName>p38</fullName>
        </recommendedName>
    </component>
    <component>
        <recommendedName>
            <fullName>p8</fullName>
        </recommendedName>
    </component>
</protein>
<evidence type="ECO:0000255" key="1"/>
<evidence type="ECO:0000255" key="2">
    <source>
        <dbReference type="HAMAP-Rule" id="MF_04090"/>
    </source>
</evidence>
<evidence type="ECO:0000255" key="3">
    <source>
        <dbReference type="PROSITE-ProRule" id="PRU00266"/>
    </source>
</evidence>
<feature type="chain" id="PRO_0000149544" description="Non-structural protein 3">
    <location>
        <begin position="1"/>
        <end position="402"/>
    </location>
</feature>
<feature type="chain" id="PRO_0000369888" description="p38">
    <location>
        <begin position="1"/>
        <end position="333"/>
    </location>
</feature>
<feature type="chain" id="PRO_0000369889" description="p8">
    <location>
        <begin position="334"/>
        <end position="402"/>
    </location>
</feature>
<feature type="domain" description="DRBM" evidence="3">
    <location>
        <begin position="334"/>
        <end position="402"/>
    </location>
</feature>
<feature type="site" description="Cleavage; by autolysis" evidence="1">
    <location>
        <begin position="333"/>
        <end position="334"/>
    </location>
</feature>
<accession>P27586</accession>
<dbReference type="EMBL" id="M69115">
    <property type="protein sequence ID" value="AAA47087.1"/>
    <property type="molecule type" value="Genomic_RNA"/>
</dbReference>
<dbReference type="PIR" id="A41040">
    <property type="entry name" value="MNXRPC"/>
</dbReference>
<dbReference type="SMR" id="P27586"/>
<dbReference type="Proteomes" id="UP000008175">
    <property type="component" value="Genome"/>
</dbReference>
<dbReference type="GO" id="GO:0030430">
    <property type="term" value="C:host cell cytoplasm"/>
    <property type="evidence" value="ECO:0007669"/>
    <property type="project" value="UniProtKB-SubCell"/>
</dbReference>
<dbReference type="GO" id="GO:0003723">
    <property type="term" value="F:RNA binding"/>
    <property type="evidence" value="ECO:0007669"/>
    <property type="project" value="UniProtKB-UniRule"/>
</dbReference>
<dbReference type="GO" id="GO:0006417">
    <property type="term" value="P:regulation of translation"/>
    <property type="evidence" value="ECO:0007669"/>
    <property type="project" value="UniProtKB-UniRule"/>
</dbReference>
<dbReference type="CDD" id="cd19868">
    <property type="entry name" value="DSRM_DGCR8_rpt2"/>
    <property type="match status" value="1"/>
</dbReference>
<dbReference type="CDD" id="cd20714">
    <property type="entry name" value="NSP3_rotavirus"/>
    <property type="match status" value="1"/>
</dbReference>
<dbReference type="Gene3D" id="3.30.70.1610">
    <property type="match status" value="1"/>
</dbReference>
<dbReference type="Gene3D" id="6.10.280.20">
    <property type="entry name" value="Rotavirus non-structural protein NSP3, N-terminal domain"/>
    <property type="match status" value="1"/>
</dbReference>
<dbReference type="HAMAP" id="MF_04090">
    <property type="entry name" value="ROTA_NSP3"/>
    <property type="match status" value="1"/>
</dbReference>
<dbReference type="InterPro" id="IPR014720">
    <property type="entry name" value="dsRBD_dom"/>
</dbReference>
<dbReference type="InterPro" id="IPR042519">
    <property type="entry name" value="NSP3_N_rotavirus"/>
</dbReference>
<dbReference type="InterPro" id="IPR036082">
    <property type="entry name" value="NSP3_sf"/>
</dbReference>
<dbReference type="InterPro" id="IPR002873">
    <property type="entry name" value="Rotavirus_NSP3"/>
</dbReference>
<dbReference type="Pfam" id="PF01665">
    <property type="entry name" value="Rota_NSP3"/>
    <property type="match status" value="1"/>
</dbReference>
<dbReference type="SUPFAM" id="SSF54768">
    <property type="entry name" value="dsRNA-binding domain-like"/>
    <property type="match status" value="1"/>
</dbReference>
<dbReference type="SUPFAM" id="SSF69903">
    <property type="entry name" value="NSP3 homodimer"/>
    <property type="match status" value="1"/>
</dbReference>
<dbReference type="PROSITE" id="PS50137">
    <property type="entry name" value="DS_RBD"/>
    <property type="match status" value="1"/>
</dbReference>
<keyword id="KW-1035">Host cytoplasm</keyword>
<keyword id="KW-0694">RNA-binding</keyword>
<keyword id="KW-0810">Translation regulation</keyword>
<reference key="1">
    <citation type="journal article" date="1991" name="Virology">
        <title>Molecular analysis of the gene 6 from a porcine group C rotavirus that encodes the NS34 equivalent of group A rotaviruses.</title>
        <authorList>
            <person name="Qian Y.A."/>
            <person name="Jiang B.M."/>
            <person name="Saif L.J."/>
            <person name="Kang S.Y."/>
            <person name="Ojeh C.K."/>
            <person name="Green K.Y."/>
        </authorList>
    </citation>
    <scope>NUCLEOTIDE SEQUENCE [GENOMIC RNA]</scope>
</reference>
<reference key="2">
    <citation type="journal article" date="1994" name="J. Virol.">
        <title>Products of the porcine group C rotavirus NSP3 gene bind specifically to double-stranded RNA and inhibit activation of the interferon-induced protein kinase PKR.</title>
        <authorList>
            <person name="Langland J.O."/>
            <person name="Pettiford S."/>
            <person name="Jiang B."/>
            <person name="Jacobs B.L."/>
        </authorList>
    </citation>
    <scope>RNA-BINDING</scope>
    <scope>PROTEOLYTIC CLEAVAGE</scope>
</reference>
<sequence length="402" mass="45125">MATQASVEWIFNIAGSAASASIAKAIKDAGGSEDFAKYVIARFYDNYKDSVDDTGVYNACIGRARTVDKALDDSRKAERNEDWHTNLETISRLDLELAELKLILSNLGIKREDRVLNSMFSVVREEGKSSNTVMLKQNAVRMIEEGKLKIRVERNENYTASLKNKIEELECMIDAFEKGKEIIISLDAMNGEVKRDGNSCSYNSTAAFVSTIVGNPIKMYDESGKPLFDVGDYLNPKHIIDKMIENEIPIFKSDYRNNESPDFDVWNERSNLKIVSINDCHAICVFKFENAWWCFDDGVLNKYSGNGNPLIVANAKFQIDKILISGDVELNPGPDPLIRLNDCKTKYGIDIICRFYIVLDNDGSIIHMCYMRTGSAEAVAKGRSKKEAKRIAAKDILDQIGL</sequence>
<comment type="function">
    <text evidence="2">May play a role in stimulating the translation of viral mRNAs.</text>
</comment>
<comment type="subcellular location">
    <subcellularLocation>
        <location evidence="2">Host cytoplasm</location>
    </subcellularLocation>
</comment>
<comment type="similarity">
    <text evidence="2">Belongs to the rotavirus NSP3 family.</text>
</comment>
<organismHost>
    <name type="scientific">Sus scrofa</name>
    <name type="common">Pig</name>
    <dbReference type="NCBI Taxonomy" id="9823"/>
</organismHost>
<organism>
    <name type="scientific">Rotavirus C (strain RVC/Pig/United States/Cowden/1980)</name>
    <name type="common">RV-C</name>
    <dbReference type="NCBI Taxonomy" id="10916"/>
    <lineage>
        <taxon>Viruses</taxon>
        <taxon>Riboviria</taxon>
        <taxon>Orthornavirae</taxon>
        <taxon>Duplornaviricota</taxon>
        <taxon>Resentoviricetes</taxon>
        <taxon>Reovirales</taxon>
        <taxon>Sedoreoviridae</taxon>
        <taxon>Rotavirus</taxon>
        <taxon>Rotavirus C</taxon>
    </lineage>
</organism>
<name>NSP3_ROTPC</name>
<proteinExistence type="evidence at protein level"/>